<name>RNPA_NITSB</name>
<reference key="1">
    <citation type="journal article" date="2007" name="Proc. Natl. Acad. Sci. U.S.A.">
        <title>Deep-sea vent epsilon-proteobacterial genomes provide insights into emergence of pathogens.</title>
        <authorList>
            <person name="Nakagawa S."/>
            <person name="Takaki Y."/>
            <person name="Shimamura S."/>
            <person name="Reysenbach A.-L."/>
            <person name="Takai K."/>
            <person name="Horikoshi K."/>
        </authorList>
    </citation>
    <scope>NUCLEOTIDE SEQUENCE [LARGE SCALE GENOMIC DNA]</scope>
    <source>
        <strain>SB155-2</strain>
    </source>
</reference>
<dbReference type="EC" id="3.1.26.5" evidence="1"/>
<dbReference type="EMBL" id="AP009178">
    <property type="protein sequence ID" value="BAF69991.1"/>
    <property type="molecule type" value="Genomic_DNA"/>
</dbReference>
<dbReference type="RefSeq" id="WP_012082254.1">
    <property type="nucleotide sequence ID" value="NC_009662.1"/>
</dbReference>
<dbReference type="SMR" id="A6Q3D2"/>
<dbReference type="STRING" id="387092.NIS_0879"/>
<dbReference type="KEGG" id="nis:NIS_0879"/>
<dbReference type="eggNOG" id="COG0594">
    <property type="taxonomic scope" value="Bacteria"/>
</dbReference>
<dbReference type="HOGENOM" id="CLU_117179_9_5_7"/>
<dbReference type="InParanoid" id="A6Q3D2"/>
<dbReference type="OrthoDB" id="9810867at2"/>
<dbReference type="Proteomes" id="UP000001118">
    <property type="component" value="Chromosome"/>
</dbReference>
<dbReference type="GO" id="GO:0030677">
    <property type="term" value="C:ribonuclease P complex"/>
    <property type="evidence" value="ECO:0007669"/>
    <property type="project" value="TreeGrafter"/>
</dbReference>
<dbReference type="GO" id="GO:0042781">
    <property type="term" value="F:3'-tRNA processing endoribonuclease activity"/>
    <property type="evidence" value="ECO:0007669"/>
    <property type="project" value="TreeGrafter"/>
</dbReference>
<dbReference type="GO" id="GO:0004526">
    <property type="term" value="F:ribonuclease P activity"/>
    <property type="evidence" value="ECO:0007669"/>
    <property type="project" value="UniProtKB-UniRule"/>
</dbReference>
<dbReference type="GO" id="GO:0000049">
    <property type="term" value="F:tRNA binding"/>
    <property type="evidence" value="ECO:0007669"/>
    <property type="project" value="UniProtKB-UniRule"/>
</dbReference>
<dbReference type="GO" id="GO:0001682">
    <property type="term" value="P:tRNA 5'-leader removal"/>
    <property type="evidence" value="ECO:0007669"/>
    <property type="project" value="UniProtKB-UniRule"/>
</dbReference>
<dbReference type="Gene3D" id="3.30.230.10">
    <property type="match status" value="1"/>
</dbReference>
<dbReference type="HAMAP" id="MF_00227">
    <property type="entry name" value="RNase_P"/>
    <property type="match status" value="1"/>
</dbReference>
<dbReference type="InterPro" id="IPR020568">
    <property type="entry name" value="Ribosomal_Su5_D2-typ_SF"/>
</dbReference>
<dbReference type="InterPro" id="IPR014721">
    <property type="entry name" value="Ribsml_uS5_D2-typ_fold_subgr"/>
</dbReference>
<dbReference type="InterPro" id="IPR000100">
    <property type="entry name" value="RNase_P"/>
</dbReference>
<dbReference type="InterPro" id="IPR020539">
    <property type="entry name" value="RNase_P_CS"/>
</dbReference>
<dbReference type="NCBIfam" id="TIGR00188">
    <property type="entry name" value="rnpA"/>
    <property type="match status" value="1"/>
</dbReference>
<dbReference type="PANTHER" id="PTHR33992">
    <property type="entry name" value="RIBONUCLEASE P PROTEIN COMPONENT"/>
    <property type="match status" value="1"/>
</dbReference>
<dbReference type="PANTHER" id="PTHR33992:SF1">
    <property type="entry name" value="RIBONUCLEASE P PROTEIN COMPONENT"/>
    <property type="match status" value="1"/>
</dbReference>
<dbReference type="Pfam" id="PF00825">
    <property type="entry name" value="Ribonuclease_P"/>
    <property type="match status" value="1"/>
</dbReference>
<dbReference type="SUPFAM" id="SSF54211">
    <property type="entry name" value="Ribosomal protein S5 domain 2-like"/>
    <property type="match status" value="1"/>
</dbReference>
<dbReference type="PROSITE" id="PS00648">
    <property type="entry name" value="RIBONUCLEASE_P"/>
    <property type="match status" value="1"/>
</dbReference>
<proteinExistence type="inferred from homology"/>
<keyword id="KW-0255">Endonuclease</keyword>
<keyword id="KW-0378">Hydrolase</keyword>
<keyword id="KW-0540">Nuclease</keyword>
<keyword id="KW-1185">Reference proteome</keyword>
<keyword id="KW-0694">RNA-binding</keyword>
<keyword id="KW-0819">tRNA processing</keyword>
<organism>
    <name type="scientific">Nitratiruptor sp. (strain SB155-2)</name>
    <dbReference type="NCBI Taxonomy" id="387092"/>
    <lineage>
        <taxon>Bacteria</taxon>
        <taxon>Pseudomonadati</taxon>
        <taxon>Campylobacterota</taxon>
        <taxon>Epsilonproteobacteria</taxon>
        <taxon>Nautiliales</taxon>
        <taxon>Nitratiruptoraceae</taxon>
        <taxon>Nitratiruptor</taxon>
    </lineage>
</organism>
<comment type="function">
    <text evidence="1">RNaseP catalyzes the removal of the 5'-leader sequence from pre-tRNA to produce the mature 5'-terminus. It can also cleave other RNA substrates such as 4.5S RNA. The protein component plays an auxiliary but essential role in vivo by binding to the 5'-leader sequence and broadening the substrate specificity of the ribozyme.</text>
</comment>
<comment type="catalytic activity">
    <reaction evidence="1">
        <text>Endonucleolytic cleavage of RNA, removing 5'-extranucleotides from tRNA precursor.</text>
        <dbReference type="EC" id="3.1.26.5"/>
    </reaction>
</comment>
<comment type="subunit">
    <text evidence="1">Consists of a catalytic RNA component (M1 or rnpB) and a protein subunit.</text>
</comment>
<comment type="similarity">
    <text evidence="1">Belongs to the RnpA family.</text>
</comment>
<feature type="chain" id="PRO_1000021438" description="Ribonuclease P protein component">
    <location>
        <begin position="1"/>
        <end position="109"/>
    </location>
</feature>
<gene>
    <name evidence="1" type="primary">rnpA</name>
    <name type="ordered locus">NIS_0879</name>
</gene>
<evidence type="ECO:0000255" key="1">
    <source>
        <dbReference type="HAMAP-Rule" id="MF_00227"/>
    </source>
</evidence>
<sequence>MKGVQTLKTKREFDYVYKRGIAFHSPYFVLFYIPDKDMRIGFVASKKVGKAVQRNRAKRVLKALFIQYFDQLPIGRYVFVAKPKLLGADFKRIDQEMTKILERIKRRKW</sequence>
<protein>
    <recommendedName>
        <fullName evidence="1">Ribonuclease P protein component</fullName>
        <shortName evidence="1">RNase P protein</shortName>
        <shortName evidence="1">RNaseP protein</shortName>
        <ecNumber evidence="1">3.1.26.5</ecNumber>
    </recommendedName>
    <alternativeName>
        <fullName evidence="1">Protein C5</fullName>
    </alternativeName>
</protein>
<accession>A6Q3D2</accession>